<protein>
    <recommendedName>
        <fullName>Probable xyloglucan endotransglucosylase/hydrolase 1</fullName>
        <shortName>LeXTH1</shortName>
        <ecNumber>2.4.1.207</ecNumber>
    </recommendedName>
</protein>
<accession>Q40144</accession>
<reference key="1">
    <citation type="journal article" date="1993" name="J. Biol. Chem.">
        <title>Molecular cloning and cDNA sequencing of endoxyloglucan transferase, a novel class of glycosyltransferase that mediates molecular grafting between matrix polysaccharides in plant cell walls.</title>
        <authorList>
            <person name="Okazawa K."/>
            <person name="Sato Y."/>
            <person name="Nakagawa T."/>
            <person name="Asada K."/>
            <person name="Kato I."/>
            <person name="Tomita E."/>
            <person name="Nishitani K."/>
        </authorList>
    </citation>
    <scope>NUCLEOTIDE SEQUENCE [MRNA]</scope>
</reference>
<keyword id="KW-0052">Apoplast</keyword>
<keyword id="KW-0134">Cell wall</keyword>
<keyword id="KW-0961">Cell wall biogenesis/degradation</keyword>
<keyword id="KW-1015">Disulfide bond</keyword>
<keyword id="KW-0325">Glycoprotein</keyword>
<keyword id="KW-0326">Glycosidase</keyword>
<keyword id="KW-0378">Hydrolase</keyword>
<keyword id="KW-1185">Reference proteome</keyword>
<keyword id="KW-0964">Secreted</keyword>
<keyword id="KW-0732">Signal</keyword>
<keyword id="KW-0808">Transferase</keyword>
<feature type="signal peptide" evidence="3">
    <location>
        <begin position="1"/>
        <end position="22"/>
    </location>
</feature>
<feature type="chain" id="PRO_0000011835" description="Probable xyloglucan endotransglucosylase/hydrolase 1">
    <location>
        <begin position="23"/>
        <end position="296"/>
    </location>
</feature>
<feature type="domain" description="GH16" evidence="4">
    <location>
        <begin position="23"/>
        <end position="221"/>
    </location>
</feature>
<feature type="active site" description="Nucleophile" evidence="5">
    <location>
        <position position="107"/>
    </location>
</feature>
<feature type="active site" description="Proton donor" evidence="5">
    <location>
        <position position="111"/>
    </location>
</feature>
<feature type="binding site" evidence="2">
    <location>
        <position position="111"/>
    </location>
    <ligand>
        <name>xyloglucan</name>
        <dbReference type="ChEBI" id="CHEBI:18233"/>
    </ligand>
</feature>
<feature type="binding site" evidence="2">
    <location>
        <begin position="124"/>
        <end position="126"/>
    </location>
    <ligand>
        <name>xyloglucan</name>
        <dbReference type="ChEBI" id="CHEBI:18233"/>
    </ligand>
</feature>
<feature type="binding site" evidence="2">
    <location>
        <begin position="134"/>
        <end position="136"/>
    </location>
    <ligand>
        <name>xyloglucan</name>
        <dbReference type="ChEBI" id="CHEBI:18233"/>
    </ligand>
</feature>
<feature type="binding site" evidence="2">
    <location>
        <begin position="200"/>
        <end position="201"/>
    </location>
    <ligand>
        <name>xyloglucan</name>
        <dbReference type="ChEBI" id="CHEBI:18233"/>
    </ligand>
</feature>
<feature type="binding site" evidence="2">
    <location>
        <position position="205"/>
    </location>
    <ligand>
        <name>xyloglucan</name>
        <dbReference type="ChEBI" id="CHEBI:18233"/>
    </ligand>
</feature>
<feature type="binding site" evidence="2">
    <location>
        <position position="282"/>
    </location>
    <ligand>
        <name>xyloglucan</name>
        <dbReference type="ChEBI" id="CHEBI:18233"/>
    </ligand>
</feature>
<feature type="site" description="Important for catalytic activity" evidence="2">
    <location>
        <position position="109"/>
    </location>
</feature>
<feature type="glycosylation site" description="N-linked (GlcNAc...) asparagine" evidence="3">
    <location>
        <position position="115"/>
    </location>
</feature>
<feature type="disulfide bond" evidence="2">
    <location>
        <begin position="229"/>
        <end position="240"/>
    </location>
</feature>
<feature type="disulfide bond" evidence="2">
    <location>
        <begin position="277"/>
        <end position="290"/>
    </location>
</feature>
<proteinExistence type="evidence at transcript level"/>
<comment type="function">
    <text evidence="1">Catalyzes xyloglucan endohydrolysis (XEH) and/or endotransglycosylation (XET). Cleaves and religates xyloglucan polymers, an essential constituent of the primary cell wall, and thereby participates in cell wall construction of growing tissues (By similarity).</text>
</comment>
<comment type="catalytic activity">
    <reaction>
        <text>breaks a beta-(1-&gt;4) bond in the backbone of a xyloglucan and transfers the xyloglucanyl segment on to O-4 of the non-reducing terminal glucose residue of an acceptor, which can be a xyloglucan or an oligosaccharide of xyloglucan.</text>
        <dbReference type="EC" id="2.4.1.207"/>
    </reaction>
</comment>
<comment type="subcellular location">
    <subcellularLocation>
        <location evidence="6">Secreted</location>
        <location evidence="6">Cell wall</location>
    </subcellularLocation>
    <subcellularLocation>
        <location evidence="6">Secreted</location>
        <location evidence="6">Extracellular space</location>
        <location evidence="6">Apoplast</location>
    </subcellularLocation>
</comment>
<comment type="PTM">
    <text evidence="1">Contains at least one intrachain disulfide bond essential for its enzymatic activity.</text>
</comment>
<comment type="similarity">
    <text evidence="6">Belongs to the glycosyl hydrolase 16 family. XTH group 1 subfamily.</text>
</comment>
<organism>
    <name type="scientific">Solanum lycopersicum</name>
    <name type="common">Tomato</name>
    <name type="synonym">Lycopersicon esculentum</name>
    <dbReference type="NCBI Taxonomy" id="4081"/>
    <lineage>
        <taxon>Eukaryota</taxon>
        <taxon>Viridiplantae</taxon>
        <taxon>Streptophyta</taxon>
        <taxon>Embryophyta</taxon>
        <taxon>Tracheophyta</taxon>
        <taxon>Spermatophyta</taxon>
        <taxon>Magnoliopsida</taxon>
        <taxon>eudicotyledons</taxon>
        <taxon>Gunneridae</taxon>
        <taxon>Pentapetalae</taxon>
        <taxon>asterids</taxon>
        <taxon>lamiids</taxon>
        <taxon>Solanales</taxon>
        <taxon>Solanaceae</taxon>
        <taxon>Solanoideae</taxon>
        <taxon>Solaneae</taxon>
        <taxon>Solanum</taxon>
        <taxon>Solanum subgen. Lycopersicon</taxon>
    </lineage>
</organism>
<name>XTH1_SOLLC</name>
<evidence type="ECO:0000250" key="1"/>
<evidence type="ECO:0000250" key="2">
    <source>
        <dbReference type="UniProtKB" id="Q8GZD5"/>
    </source>
</evidence>
<evidence type="ECO:0000255" key="3"/>
<evidence type="ECO:0000255" key="4">
    <source>
        <dbReference type="PROSITE-ProRule" id="PRU01098"/>
    </source>
</evidence>
<evidence type="ECO:0000255" key="5">
    <source>
        <dbReference type="PROSITE-ProRule" id="PRU10064"/>
    </source>
</evidence>
<evidence type="ECO:0000305" key="6"/>
<gene>
    <name type="primary">XTH1</name>
    <name type="synonym">EXT</name>
</gene>
<sequence>MGIIKGVLFSIVLINLSLVVFCGYPRRPVDVPFWKNYEPSWASHHIKFLNGGTTTDLILDRSSGAGFQSKKSYLFGHFSMKMRLVGGDSAGVVTAFYLSSNNAEHDEIDFEFLGNRTGQPYILQTNVFTGGKGNREQRIYLWFDPTKGYHSYSVLWNTYLIVIFVDDVPIRAFKNSKDLGVKFPFNQPMKIYSSLWDADDWATRGGLEKTNWANAPFTASYTSFHVDGCEAATPQEVQVCNTKGMKWWDQKAFQDLDALQYRRLRWVRQKYTVYNYCTDKARYPVPPPECTKDRDI</sequence>
<dbReference type="EC" id="2.4.1.207"/>
<dbReference type="EMBL" id="D16456">
    <property type="protein sequence ID" value="BAA03923.1"/>
    <property type="molecule type" value="mRNA"/>
</dbReference>
<dbReference type="PIR" id="D49539">
    <property type="entry name" value="D49539"/>
</dbReference>
<dbReference type="RefSeq" id="NP_001233858.1">
    <property type="nucleotide sequence ID" value="NM_001246929.2"/>
</dbReference>
<dbReference type="SMR" id="Q40144"/>
<dbReference type="STRING" id="4081.Q40144"/>
<dbReference type="CAZy" id="GH16">
    <property type="family name" value="Glycoside Hydrolase Family 16"/>
</dbReference>
<dbReference type="GlyCosmos" id="Q40144">
    <property type="glycosylation" value="1 site, No reported glycans"/>
</dbReference>
<dbReference type="PaxDb" id="4081-Solyc01g099630.2.1"/>
<dbReference type="EnsemblPlants" id="Solyc01g099630.3.1">
    <property type="protein sequence ID" value="Solyc01g099630.3.1"/>
    <property type="gene ID" value="Solyc01g099630.3"/>
</dbReference>
<dbReference type="GeneID" id="544272"/>
<dbReference type="Gramene" id="Solyc01g099630.3.1">
    <property type="protein sequence ID" value="Solyc01g099630.3.1"/>
    <property type="gene ID" value="Solyc01g099630.3"/>
</dbReference>
<dbReference type="KEGG" id="sly:544272"/>
<dbReference type="eggNOG" id="ENOG502QQ71">
    <property type="taxonomic scope" value="Eukaryota"/>
</dbReference>
<dbReference type="HOGENOM" id="CLU_048041_2_1_1"/>
<dbReference type="InParanoid" id="Q40144"/>
<dbReference type="OMA" id="HHIKFLN"/>
<dbReference type="OrthoDB" id="4781at2759"/>
<dbReference type="PhylomeDB" id="Q40144"/>
<dbReference type="BRENDA" id="2.4.1.207">
    <property type="organism ID" value="3101"/>
</dbReference>
<dbReference type="BRENDA" id="3.2.1.151">
    <property type="organism ID" value="3101"/>
</dbReference>
<dbReference type="Proteomes" id="UP000004994">
    <property type="component" value="Chromosome 1"/>
</dbReference>
<dbReference type="GO" id="GO:0048046">
    <property type="term" value="C:apoplast"/>
    <property type="evidence" value="ECO:0007669"/>
    <property type="project" value="UniProtKB-SubCell"/>
</dbReference>
<dbReference type="GO" id="GO:0004553">
    <property type="term" value="F:hydrolase activity, hydrolyzing O-glycosyl compounds"/>
    <property type="evidence" value="ECO:0007669"/>
    <property type="project" value="InterPro"/>
</dbReference>
<dbReference type="GO" id="GO:0030247">
    <property type="term" value="F:polysaccharide binding"/>
    <property type="evidence" value="ECO:0000250"/>
    <property type="project" value="UniProtKB"/>
</dbReference>
<dbReference type="GO" id="GO:0016762">
    <property type="term" value="F:xyloglucan:xyloglucosyl transferase activity"/>
    <property type="evidence" value="ECO:0007669"/>
    <property type="project" value="UniProtKB-EC"/>
</dbReference>
<dbReference type="GO" id="GO:0042546">
    <property type="term" value="P:cell wall biogenesis"/>
    <property type="evidence" value="ECO:0007669"/>
    <property type="project" value="InterPro"/>
</dbReference>
<dbReference type="GO" id="GO:0071555">
    <property type="term" value="P:cell wall organization"/>
    <property type="evidence" value="ECO:0007669"/>
    <property type="project" value="UniProtKB-KW"/>
</dbReference>
<dbReference type="GO" id="GO:0010411">
    <property type="term" value="P:xyloglucan metabolic process"/>
    <property type="evidence" value="ECO:0007669"/>
    <property type="project" value="InterPro"/>
</dbReference>
<dbReference type="CDD" id="cd02176">
    <property type="entry name" value="GH16_XET"/>
    <property type="match status" value="1"/>
</dbReference>
<dbReference type="FunFam" id="2.60.120.200:FF:000025">
    <property type="entry name" value="Xyloglucan endotransglucosylase/hydrolase"/>
    <property type="match status" value="1"/>
</dbReference>
<dbReference type="Gene3D" id="2.60.120.200">
    <property type="match status" value="1"/>
</dbReference>
<dbReference type="InterPro" id="IPR044791">
    <property type="entry name" value="Beta-glucanase/XTH"/>
</dbReference>
<dbReference type="InterPro" id="IPR008264">
    <property type="entry name" value="Beta_glucanase"/>
</dbReference>
<dbReference type="InterPro" id="IPR013320">
    <property type="entry name" value="ConA-like_dom_sf"/>
</dbReference>
<dbReference type="InterPro" id="IPR000757">
    <property type="entry name" value="GH16"/>
</dbReference>
<dbReference type="InterPro" id="IPR008263">
    <property type="entry name" value="GH16_AS"/>
</dbReference>
<dbReference type="InterPro" id="IPR010713">
    <property type="entry name" value="XET_C"/>
</dbReference>
<dbReference type="InterPro" id="IPR016455">
    <property type="entry name" value="XTH"/>
</dbReference>
<dbReference type="PANTHER" id="PTHR31062">
    <property type="entry name" value="XYLOGLUCAN ENDOTRANSGLUCOSYLASE/HYDROLASE PROTEIN 8-RELATED"/>
    <property type="match status" value="1"/>
</dbReference>
<dbReference type="Pfam" id="PF00722">
    <property type="entry name" value="Glyco_hydro_16"/>
    <property type="match status" value="1"/>
</dbReference>
<dbReference type="Pfam" id="PF06955">
    <property type="entry name" value="XET_C"/>
    <property type="match status" value="1"/>
</dbReference>
<dbReference type="PIRSF" id="PIRSF005604">
    <property type="entry name" value="XET"/>
    <property type="match status" value="1"/>
</dbReference>
<dbReference type="PRINTS" id="PR00737">
    <property type="entry name" value="GLHYDRLASE16"/>
</dbReference>
<dbReference type="SUPFAM" id="SSF49899">
    <property type="entry name" value="Concanavalin A-like lectins/glucanases"/>
    <property type="match status" value="1"/>
</dbReference>
<dbReference type="PROSITE" id="PS01034">
    <property type="entry name" value="GH16_1"/>
    <property type="match status" value="1"/>
</dbReference>
<dbReference type="PROSITE" id="PS51762">
    <property type="entry name" value="GH16_2"/>
    <property type="match status" value="1"/>
</dbReference>